<gene>
    <name evidence="1" type="primary">parE</name>
    <name type="synonym">grlB</name>
    <name type="ordered locus">SACOL1389</name>
</gene>
<dbReference type="EC" id="5.6.2.2" evidence="1"/>
<dbReference type="EMBL" id="CP000046">
    <property type="protein sequence ID" value="AAW36638.1"/>
    <property type="status" value="ALT_INIT"/>
    <property type="molecule type" value="Genomic_DNA"/>
</dbReference>
<dbReference type="RefSeq" id="WP_001548666.1">
    <property type="nucleotide sequence ID" value="NZ_JBGOFO010000003.1"/>
</dbReference>
<dbReference type="SMR" id="Q5HG65"/>
<dbReference type="KEGG" id="sac:SACOL1389"/>
<dbReference type="HOGENOM" id="CLU_006146_4_1_9"/>
<dbReference type="Proteomes" id="UP000000530">
    <property type="component" value="Chromosome"/>
</dbReference>
<dbReference type="GO" id="GO:0005694">
    <property type="term" value="C:chromosome"/>
    <property type="evidence" value="ECO:0007669"/>
    <property type="project" value="InterPro"/>
</dbReference>
<dbReference type="GO" id="GO:0005524">
    <property type="term" value="F:ATP binding"/>
    <property type="evidence" value="ECO:0007669"/>
    <property type="project" value="UniProtKB-UniRule"/>
</dbReference>
<dbReference type="GO" id="GO:0003677">
    <property type="term" value="F:DNA binding"/>
    <property type="evidence" value="ECO:0007669"/>
    <property type="project" value="UniProtKB-UniRule"/>
</dbReference>
<dbReference type="GO" id="GO:0034335">
    <property type="term" value="F:DNA negative supercoiling activity"/>
    <property type="evidence" value="ECO:0007669"/>
    <property type="project" value="UniProtKB-ARBA"/>
</dbReference>
<dbReference type="GO" id="GO:0046872">
    <property type="term" value="F:metal ion binding"/>
    <property type="evidence" value="ECO:0007669"/>
    <property type="project" value="UniProtKB-KW"/>
</dbReference>
<dbReference type="GO" id="GO:0007059">
    <property type="term" value="P:chromosome segregation"/>
    <property type="evidence" value="ECO:0007669"/>
    <property type="project" value="UniProtKB-UniRule"/>
</dbReference>
<dbReference type="GO" id="GO:0006265">
    <property type="term" value="P:DNA topological change"/>
    <property type="evidence" value="ECO:0007669"/>
    <property type="project" value="UniProtKB-UniRule"/>
</dbReference>
<dbReference type="CDD" id="cd16928">
    <property type="entry name" value="HATPase_GyrB-like"/>
    <property type="match status" value="1"/>
</dbReference>
<dbReference type="CDD" id="cd00822">
    <property type="entry name" value="TopoII_Trans_DNA_gyrase"/>
    <property type="match status" value="1"/>
</dbReference>
<dbReference type="FunFam" id="3.30.230.10:FF:000005">
    <property type="entry name" value="DNA gyrase subunit B"/>
    <property type="match status" value="1"/>
</dbReference>
<dbReference type="FunFam" id="3.30.565.10:FF:000002">
    <property type="entry name" value="DNA gyrase subunit B"/>
    <property type="match status" value="1"/>
</dbReference>
<dbReference type="FunFam" id="3.40.50.670:FF:000002">
    <property type="entry name" value="DNA gyrase subunit B"/>
    <property type="match status" value="1"/>
</dbReference>
<dbReference type="Gene3D" id="3.30.230.10">
    <property type="match status" value="1"/>
</dbReference>
<dbReference type="Gene3D" id="3.40.50.670">
    <property type="match status" value="1"/>
</dbReference>
<dbReference type="Gene3D" id="3.30.565.10">
    <property type="entry name" value="Histidine kinase-like ATPase, C-terminal domain"/>
    <property type="match status" value="1"/>
</dbReference>
<dbReference type="HAMAP" id="MF_00939">
    <property type="entry name" value="ParE_type2"/>
    <property type="match status" value="1"/>
</dbReference>
<dbReference type="InterPro" id="IPR002288">
    <property type="entry name" value="DNA_gyrase_B_C"/>
</dbReference>
<dbReference type="InterPro" id="IPR036890">
    <property type="entry name" value="HATPase_C_sf"/>
</dbReference>
<dbReference type="InterPro" id="IPR005740">
    <property type="entry name" value="ParE_type2"/>
</dbReference>
<dbReference type="InterPro" id="IPR020568">
    <property type="entry name" value="Ribosomal_Su5_D2-typ_SF"/>
</dbReference>
<dbReference type="InterPro" id="IPR014721">
    <property type="entry name" value="Ribsml_uS5_D2-typ_fold_subgr"/>
</dbReference>
<dbReference type="InterPro" id="IPR001241">
    <property type="entry name" value="Topo_IIA"/>
</dbReference>
<dbReference type="InterPro" id="IPR013760">
    <property type="entry name" value="Topo_IIA-like_dom_sf"/>
</dbReference>
<dbReference type="InterPro" id="IPR000565">
    <property type="entry name" value="Topo_IIA_B"/>
</dbReference>
<dbReference type="InterPro" id="IPR013759">
    <property type="entry name" value="Topo_IIA_B_C"/>
</dbReference>
<dbReference type="InterPro" id="IPR013506">
    <property type="entry name" value="Topo_IIA_bsu_dom2"/>
</dbReference>
<dbReference type="InterPro" id="IPR018522">
    <property type="entry name" value="TopoIIA_CS"/>
</dbReference>
<dbReference type="InterPro" id="IPR006171">
    <property type="entry name" value="TOPRIM_dom"/>
</dbReference>
<dbReference type="NCBIfam" id="TIGR01058">
    <property type="entry name" value="parE_Gpos"/>
    <property type="match status" value="1"/>
</dbReference>
<dbReference type="NCBIfam" id="NF004189">
    <property type="entry name" value="PRK05644.1"/>
    <property type="match status" value="1"/>
</dbReference>
<dbReference type="PANTHER" id="PTHR45866">
    <property type="entry name" value="DNA GYRASE/TOPOISOMERASE SUBUNIT B"/>
    <property type="match status" value="1"/>
</dbReference>
<dbReference type="PANTHER" id="PTHR45866:SF12">
    <property type="entry name" value="DNA TOPOISOMERASE 4 SUBUNIT B"/>
    <property type="match status" value="1"/>
</dbReference>
<dbReference type="Pfam" id="PF00204">
    <property type="entry name" value="DNA_gyraseB"/>
    <property type="match status" value="1"/>
</dbReference>
<dbReference type="Pfam" id="PF00986">
    <property type="entry name" value="DNA_gyraseB_C"/>
    <property type="match status" value="1"/>
</dbReference>
<dbReference type="Pfam" id="PF02518">
    <property type="entry name" value="HATPase_c"/>
    <property type="match status" value="1"/>
</dbReference>
<dbReference type="Pfam" id="PF01751">
    <property type="entry name" value="Toprim"/>
    <property type="match status" value="1"/>
</dbReference>
<dbReference type="PRINTS" id="PR01159">
    <property type="entry name" value="DNAGYRASEB"/>
</dbReference>
<dbReference type="PRINTS" id="PR00418">
    <property type="entry name" value="TPI2FAMILY"/>
</dbReference>
<dbReference type="SMART" id="SM00387">
    <property type="entry name" value="HATPase_c"/>
    <property type="match status" value="1"/>
</dbReference>
<dbReference type="SMART" id="SM00433">
    <property type="entry name" value="TOP2c"/>
    <property type="match status" value="1"/>
</dbReference>
<dbReference type="SUPFAM" id="SSF55874">
    <property type="entry name" value="ATPase domain of HSP90 chaperone/DNA topoisomerase II/histidine kinase"/>
    <property type="match status" value="1"/>
</dbReference>
<dbReference type="SUPFAM" id="SSF54211">
    <property type="entry name" value="Ribosomal protein S5 domain 2-like"/>
    <property type="match status" value="1"/>
</dbReference>
<dbReference type="SUPFAM" id="SSF56719">
    <property type="entry name" value="Type II DNA topoisomerase"/>
    <property type="match status" value="1"/>
</dbReference>
<dbReference type="PROSITE" id="PS00177">
    <property type="entry name" value="TOPOISOMERASE_II"/>
    <property type="match status" value="1"/>
</dbReference>
<dbReference type="PROSITE" id="PS50880">
    <property type="entry name" value="TOPRIM"/>
    <property type="match status" value="1"/>
</dbReference>
<name>PARE_STAAC</name>
<feature type="chain" id="PRO_0000145434" description="DNA topoisomerase 4 subunit B">
    <location>
        <begin position="1"/>
        <end position="663"/>
    </location>
</feature>
<feature type="domain" description="Toprim" evidence="1">
    <location>
        <begin position="424"/>
        <end position="538"/>
    </location>
</feature>
<feature type="region of interest" description="Disordered" evidence="2">
    <location>
        <begin position="386"/>
        <end position="416"/>
    </location>
</feature>
<feature type="compositionally biased region" description="Basic and acidic residues" evidence="2">
    <location>
        <begin position="387"/>
        <end position="398"/>
    </location>
</feature>
<feature type="binding site" evidence="1">
    <location>
        <position position="7"/>
    </location>
    <ligand>
        <name>ATP</name>
        <dbReference type="ChEBI" id="CHEBI:30616"/>
    </ligand>
</feature>
<feature type="binding site" evidence="1">
    <location>
        <position position="47"/>
    </location>
    <ligand>
        <name>ATP</name>
        <dbReference type="ChEBI" id="CHEBI:30616"/>
    </ligand>
</feature>
<feature type="binding site" evidence="1">
    <location>
        <position position="74"/>
    </location>
    <ligand>
        <name>ATP</name>
        <dbReference type="ChEBI" id="CHEBI:30616"/>
    </ligand>
</feature>
<feature type="binding site" evidence="1">
    <location>
        <begin position="114"/>
        <end position="120"/>
    </location>
    <ligand>
        <name>ATP</name>
        <dbReference type="ChEBI" id="CHEBI:30616"/>
    </ligand>
</feature>
<feature type="binding site" evidence="1">
    <location>
        <position position="341"/>
    </location>
    <ligand>
        <name>ATP</name>
        <dbReference type="ChEBI" id="CHEBI:30616"/>
    </ligand>
</feature>
<feature type="binding site" evidence="1">
    <location>
        <position position="430"/>
    </location>
    <ligand>
        <name>Mg(2+)</name>
        <dbReference type="ChEBI" id="CHEBI:18420"/>
        <label>1</label>
        <note>catalytic</note>
    </ligand>
</feature>
<feature type="binding site" evidence="1">
    <location>
        <position position="503"/>
    </location>
    <ligand>
        <name>Mg(2+)</name>
        <dbReference type="ChEBI" id="CHEBI:18420"/>
        <label>1</label>
        <note>catalytic</note>
    </ligand>
</feature>
<feature type="binding site" evidence="1">
    <location>
        <position position="503"/>
    </location>
    <ligand>
        <name>Mg(2+)</name>
        <dbReference type="ChEBI" id="CHEBI:18420"/>
        <label>2</label>
    </ligand>
</feature>
<feature type="binding site" evidence="1">
    <location>
        <position position="505"/>
    </location>
    <ligand>
        <name>Mg(2+)</name>
        <dbReference type="ChEBI" id="CHEBI:18420"/>
        <label>2</label>
    </ligand>
</feature>
<feature type="site" description="Interaction with DNA" evidence="1">
    <location>
        <position position="455"/>
    </location>
</feature>
<feature type="site" description="Interaction with DNA" evidence="1">
    <location>
        <position position="458"/>
    </location>
</feature>
<feature type="site" description="Interaction with DNA" evidence="1">
    <location>
        <position position="510"/>
    </location>
</feature>
<feature type="site" description="Interaction with DNA" evidence="1">
    <location>
        <position position="626"/>
    </location>
</feature>
<proteinExistence type="inferred from homology"/>
<organism>
    <name type="scientific">Staphylococcus aureus (strain COL)</name>
    <dbReference type="NCBI Taxonomy" id="93062"/>
    <lineage>
        <taxon>Bacteria</taxon>
        <taxon>Bacillati</taxon>
        <taxon>Bacillota</taxon>
        <taxon>Bacilli</taxon>
        <taxon>Bacillales</taxon>
        <taxon>Staphylococcaceae</taxon>
        <taxon>Staphylococcus</taxon>
    </lineage>
</organism>
<reference key="1">
    <citation type="journal article" date="2005" name="J. Bacteriol.">
        <title>Insights on evolution of virulence and resistance from the complete genome analysis of an early methicillin-resistant Staphylococcus aureus strain and a biofilm-producing methicillin-resistant Staphylococcus epidermidis strain.</title>
        <authorList>
            <person name="Gill S.R."/>
            <person name="Fouts D.E."/>
            <person name="Archer G.L."/>
            <person name="Mongodin E.F."/>
            <person name="DeBoy R.T."/>
            <person name="Ravel J."/>
            <person name="Paulsen I.T."/>
            <person name="Kolonay J.F."/>
            <person name="Brinkac L.M."/>
            <person name="Beanan M.J."/>
            <person name="Dodson R.J."/>
            <person name="Daugherty S.C."/>
            <person name="Madupu R."/>
            <person name="Angiuoli S.V."/>
            <person name="Durkin A.S."/>
            <person name="Haft D.H."/>
            <person name="Vamathevan J.J."/>
            <person name="Khouri H."/>
            <person name="Utterback T.R."/>
            <person name="Lee C."/>
            <person name="Dimitrov G."/>
            <person name="Jiang L."/>
            <person name="Qin H."/>
            <person name="Weidman J."/>
            <person name="Tran K."/>
            <person name="Kang K.H."/>
            <person name="Hance I.R."/>
            <person name="Nelson K.E."/>
            <person name="Fraser C.M."/>
        </authorList>
    </citation>
    <scope>NUCLEOTIDE SEQUENCE [LARGE SCALE GENOMIC DNA]</scope>
    <source>
        <strain>COL</strain>
    </source>
</reference>
<accession>Q5HG65</accession>
<comment type="function">
    <text evidence="1">Topoisomerase IV is essential for chromosome segregation. It relaxes supercoiled DNA. Performs the decatenation events required during the replication of a circular DNA molecule.</text>
</comment>
<comment type="catalytic activity">
    <reaction evidence="1">
        <text>ATP-dependent breakage, passage and rejoining of double-stranded DNA.</text>
        <dbReference type="EC" id="5.6.2.2"/>
    </reaction>
</comment>
<comment type="cofactor">
    <cofactor evidence="1">
        <name>Mg(2+)</name>
        <dbReference type="ChEBI" id="CHEBI:18420"/>
    </cofactor>
    <cofactor evidence="1">
        <name>Mn(2+)</name>
        <dbReference type="ChEBI" id="CHEBI:29035"/>
    </cofactor>
    <cofactor evidence="1">
        <name>Ca(2+)</name>
        <dbReference type="ChEBI" id="CHEBI:29108"/>
    </cofactor>
    <text evidence="1">Binds two Mg(2+) per subunit. The magnesium ions form salt bridges with both the protein and the DNA. Can also accept other divalent metal cations, such as Mn(2+) or Ca(2+).</text>
</comment>
<comment type="subunit">
    <text evidence="1">Heterotetramer composed of ParC and ParE.</text>
</comment>
<comment type="similarity">
    <text evidence="1">Belongs to the type II topoisomerase family. ParE type 2 subfamily.</text>
</comment>
<comment type="sequence caution" evidence="3">
    <conflict type="erroneous initiation">
        <sequence resource="EMBL-CDS" id="AAW36638"/>
    </conflict>
</comment>
<evidence type="ECO:0000255" key="1">
    <source>
        <dbReference type="HAMAP-Rule" id="MF_00939"/>
    </source>
</evidence>
<evidence type="ECO:0000256" key="2">
    <source>
        <dbReference type="SAM" id="MobiDB-lite"/>
    </source>
</evidence>
<evidence type="ECO:0000305" key="3"/>
<protein>
    <recommendedName>
        <fullName evidence="1">DNA topoisomerase 4 subunit B</fullName>
        <ecNumber evidence="1">5.6.2.2</ecNumber>
    </recommendedName>
    <alternativeName>
        <fullName evidence="1">Topoisomerase IV subunit B</fullName>
    </alternativeName>
</protein>
<sequence>MNKQNNYSDDSIQVLEGLEAVRKRPGMYIGSTDKRGLHHLVYEIVDNSVDEVLNGYGNEIDVTINKDGSISIEDNGRGMPTGIHKSGKPTVEVIFTVLHAGGKFGQGGYKTSGGLHGVGASVVNALSEWLEVEIHRDGNIYHQSFKNGGSPSSGLVKKGKTKKTGTKVTFKPDDTIFKASTSFNFDVLSERLQESAFLLKNLKITLNDLRSGKERQEHYHYEEGIKEFVSYVNEGKEVLHDVATFSGEANGIEVDVAFQYNDQYSESILSFVNNVRTKDGGTHEVGFKTAMTRVFNDYARRINELKTKDKNLDGNDIREGLTAVVSVRIPEELLQFEGQTKSKLGTSEARSAVDSVVADKLPFYLEEKGQLSKSLVKKAIKAQQAREAARKAREDARSGKKNKRKDTLLSGKLTPAQSKNTEKNELYLVEGDSAGGSAKLGRDRKFQAILPLRGKVINTEKARLEDIFKNEEINTIIHTIGAGVGTDFKIEDSNYNRVIIMTDADTDGAHIQVLLLTFFFKYMKPLVQAGRVFIALPPLYKLEKGKGKTKRVEYAWTDEELNKLQKELGKGFTLQRYKGLGEMNPEQLWETTMNPETRTLIRVQVEDEVRSSKRVTTLMGDKVQPRREWIEKHVEFGMQEDQSILDNSEVQVLENDQFDEEEI</sequence>
<keyword id="KW-0067">ATP-binding</keyword>
<keyword id="KW-0238">DNA-binding</keyword>
<keyword id="KW-0413">Isomerase</keyword>
<keyword id="KW-0460">Magnesium</keyword>
<keyword id="KW-0479">Metal-binding</keyword>
<keyword id="KW-0547">Nucleotide-binding</keyword>
<keyword id="KW-0799">Topoisomerase</keyword>